<dbReference type="EC" id="2.7.8.13" evidence="1"/>
<dbReference type="EMBL" id="AE009949">
    <property type="protein sequence ID" value="AAL98215.1"/>
    <property type="molecule type" value="Genomic_DNA"/>
</dbReference>
<dbReference type="RefSeq" id="WP_011018074.1">
    <property type="nucleotide sequence ID" value="NC_003485.1"/>
</dbReference>
<dbReference type="SMR" id="Q8NZY2"/>
<dbReference type="KEGG" id="spm:spyM18_1673"/>
<dbReference type="HOGENOM" id="CLU_023982_0_1_9"/>
<dbReference type="UniPathway" id="UPA00219"/>
<dbReference type="GO" id="GO:0005886">
    <property type="term" value="C:plasma membrane"/>
    <property type="evidence" value="ECO:0007669"/>
    <property type="project" value="UniProtKB-SubCell"/>
</dbReference>
<dbReference type="GO" id="GO:0046872">
    <property type="term" value="F:metal ion binding"/>
    <property type="evidence" value="ECO:0007669"/>
    <property type="project" value="UniProtKB-KW"/>
</dbReference>
<dbReference type="GO" id="GO:0008963">
    <property type="term" value="F:phospho-N-acetylmuramoyl-pentapeptide-transferase activity"/>
    <property type="evidence" value="ECO:0007669"/>
    <property type="project" value="UniProtKB-UniRule"/>
</dbReference>
<dbReference type="GO" id="GO:0051301">
    <property type="term" value="P:cell division"/>
    <property type="evidence" value="ECO:0007669"/>
    <property type="project" value="UniProtKB-KW"/>
</dbReference>
<dbReference type="GO" id="GO:0071555">
    <property type="term" value="P:cell wall organization"/>
    <property type="evidence" value="ECO:0007669"/>
    <property type="project" value="UniProtKB-KW"/>
</dbReference>
<dbReference type="GO" id="GO:0009252">
    <property type="term" value="P:peptidoglycan biosynthetic process"/>
    <property type="evidence" value="ECO:0007669"/>
    <property type="project" value="UniProtKB-UniRule"/>
</dbReference>
<dbReference type="GO" id="GO:0008360">
    <property type="term" value="P:regulation of cell shape"/>
    <property type="evidence" value="ECO:0007669"/>
    <property type="project" value="UniProtKB-KW"/>
</dbReference>
<dbReference type="CDD" id="cd06852">
    <property type="entry name" value="GT_MraY"/>
    <property type="match status" value="1"/>
</dbReference>
<dbReference type="HAMAP" id="MF_00038">
    <property type="entry name" value="MraY"/>
    <property type="match status" value="1"/>
</dbReference>
<dbReference type="InterPro" id="IPR000715">
    <property type="entry name" value="Glycosyl_transferase_4"/>
</dbReference>
<dbReference type="InterPro" id="IPR003524">
    <property type="entry name" value="PNAcMuramoyl-5peptid_Trfase"/>
</dbReference>
<dbReference type="InterPro" id="IPR018480">
    <property type="entry name" value="PNAcMuramoyl-5peptid_Trfase_CS"/>
</dbReference>
<dbReference type="NCBIfam" id="TIGR00445">
    <property type="entry name" value="mraY"/>
    <property type="match status" value="1"/>
</dbReference>
<dbReference type="PANTHER" id="PTHR22926">
    <property type="entry name" value="PHOSPHO-N-ACETYLMURAMOYL-PENTAPEPTIDE-TRANSFERASE"/>
    <property type="match status" value="1"/>
</dbReference>
<dbReference type="PANTHER" id="PTHR22926:SF5">
    <property type="entry name" value="PHOSPHO-N-ACETYLMURAMOYL-PENTAPEPTIDE-TRANSFERASE HOMOLOG"/>
    <property type="match status" value="1"/>
</dbReference>
<dbReference type="Pfam" id="PF00953">
    <property type="entry name" value="Glycos_transf_4"/>
    <property type="match status" value="1"/>
</dbReference>
<dbReference type="Pfam" id="PF10555">
    <property type="entry name" value="MraY_sig1"/>
    <property type="match status" value="1"/>
</dbReference>
<dbReference type="PROSITE" id="PS01348">
    <property type="entry name" value="MRAY_2"/>
    <property type="match status" value="1"/>
</dbReference>
<protein>
    <recommendedName>
        <fullName evidence="1">Phospho-N-acetylmuramoyl-pentapeptide-transferase</fullName>
        <ecNumber evidence="1">2.7.8.13</ecNumber>
    </recommendedName>
    <alternativeName>
        <fullName evidence="1">UDP-MurNAc-pentapeptide phosphotransferase</fullName>
    </alternativeName>
</protein>
<name>MRAY_STRP8</name>
<evidence type="ECO:0000255" key="1">
    <source>
        <dbReference type="HAMAP-Rule" id="MF_00038"/>
    </source>
</evidence>
<keyword id="KW-0131">Cell cycle</keyword>
<keyword id="KW-0132">Cell division</keyword>
<keyword id="KW-1003">Cell membrane</keyword>
<keyword id="KW-0133">Cell shape</keyword>
<keyword id="KW-0961">Cell wall biogenesis/degradation</keyword>
<keyword id="KW-0460">Magnesium</keyword>
<keyword id="KW-0472">Membrane</keyword>
<keyword id="KW-0479">Metal-binding</keyword>
<keyword id="KW-0573">Peptidoglycan synthesis</keyword>
<keyword id="KW-0808">Transferase</keyword>
<keyword id="KW-0812">Transmembrane</keyword>
<keyword id="KW-1133">Transmembrane helix</keyword>
<comment type="function">
    <text evidence="1">Catalyzes the initial step of the lipid cycle reactions in the biosynthesis of the cell wall peptidoglycan: transfers peptidoglycan precursor phospho-MurNAc-pentapeptide from UDP-MurNAc-pentapeptide onto the lipid carrier undecaprenyl phosphate, yielding undecaprenyl-pyrophosphoryl-MurNAc-pentapeptide, known as lipid I.</text>
</comment>
<comment type="catalytic activity">
    <reaction evidence="1">
        <text>UDP-N-acetyl-alpha-D-muramoyl-L-alanyl-gamma-D-glutamyl-L-lysyl-D-alanyl-D-alanine + di-trans,octa-cis-undecaprenyl phosphate = Mur2Ac(oyl-L-Ala-gamma-D-Glu-L-Lys-D-Ala-D-Ala)-di-trans,octa-cis-undecaprenyl diphosphate + UMP</text>
        <dbReference type="Rhea" id="RHEA:21920"/>
        <dbReference type="ChEBI" id="CHEBI:57865"/>
        <dbReference type="ChEBI" id="CHEBI:60032"/>
        <dbReference type="ChEBI" id="CHEBI:60392"/>
        <dbReference type="ChEBI" id="CHEBI:70758"/>
        <dbReference type="EC" id="2.7.8.13"/>
    </reaction>
</comment>
<comment type="cofactor">
    <cofactor evidence="1">
        <name>Mg(2+)</name>
        <dbReference type="ChEBI" id="CHEBI:18420"/>
    </cofactor>
</comment>
<comment type="pathway">
    <text evidence="1">Cell wall biogenesis; peptidoglycan biosynthesis.</text>
</comment>
<comment type="subcellular location">
    <subcellularLocation>
        <location evidence="1">Cell membrane</location>
        <topology evidence="1">Multi-pass membrane protein</topology>
    </subcellularLocation>
</comment>
<comment type="similarity">
    <text evidence="1">Belongs to the glycosyltransferase 4 family. MraY subfamily.</text>
</comment>
<sequence>MFLTLIAAIISFMVSAFTMPYFIKFYQLKKIGGQQMHEDVKQHLAKAGTPTMGGTVFLLVATAVSLLVSLFSIKNTQSLALISGILSIVVIYGIIGFLDDFLKIFKQINEGLTAKQKLALQLAGGLMFYFLHVSPSGISSINVFGYQLSLGIFYLFFVLFWVVGFSNAVNLTDGIDGLASISVVISLVTYGVIAYVQWQFDVLLLIGTMIGALLGFFCFNHKPAKVFMGDVGSLALGAMLAAISIALRQEWTLLIIGIVYVLETSSVMLQVFYFKYTKKKYGEGRRIFRMTPFHHHLELGGLSGKGKKWSEWQVDAFLWGVGSLASLLVLAILYVF</sequence>
<proteinExistence type="inferred from homology"/>
<reference key="1">
    <citation type="journal article" date="2002" name="Proc. Natl. Acad. Sci. U.S.A.">
        <title>Genome sequence and comparative microarray analysis of serotype M18 group A Streptococcus strains associated with acute rheumatic fever outbreaks.</title>
        <authorList>
            <person name="Smoot J.C."/>
            <person name="Barbian K.D."/>
            <person name="Van Gompel J.J."/>
            <person name="Smoot L.M."/>
            <person name="Chaussee M.S."/>
            <person name="Sylva G.L."/>
            <person name="Sturdevant D.E."/>
            <person name="Ricklefs S.M."/>
            <person name="Porcella S.F."/>
            <person name="Parkins L.D."/>
            <person name="Beres S.B."/>
            <person name="Campbell D.S."/>
            <person name="Smith T.M."/>
            <person name="Zhang Q."/>
            <person name="Kapur V."/>
            <person name="Daly J.A."/>
            <person name="Veasy L.G."/>
            <person name="Musser J.M."/>
        </authorList>
    </citation>
    <scope>NUCLEOTIDE SEQUENCE [LARGE SCALE GENOMIC DNA]</scope>
    <source>
        <strain>MGAS8232</strain>
    </source>
</reference>
<accession>Q8NZY2</accession>
<feature type="chain" id="PRO_0000108909" description="Phospho-N-acetylmuramoyl-pentapeptide-transferase">
    <location>
        <begin position="1"/>
        <end position="336"/>
    </location>
</feature>
<feature type="transmembrane region" description="Helical" evidence="1">
    <location>
        <begin position="3"/>
        <end position="23"/>
    </location>
</feature>
<feature type="transmembrane region" description="Helical" evidence="1">
    <location>
        <begin position="53"/>
        <end position="73"/>
    </location>
</feature>
<feature type="transmembrane region" description="Helical" evidence="1">
    <location>
        <begin position="78"/>
        <end position="98"/>
    </location>
</feature>
<feature type="transmembrane region" description="Helical" evidence="1">
    <location>
        <begin position="118"/>
        <end position="138"/>
    </location>
</feature>
<feature type="transmembrane region" description="Helical" evidence="1">
    <location>
        <begin position="143"/>
        <end position="163"/>
    </location>
</feature>
<feature type="transmembrane region" description="Helical" evidence="1">
    <location>
        <begin position="174"/>
        <end position="194"/>
    </location>
</feature>
<feature type="transmembrane region" description="Helical" evidence="1">
    <location>
        <begin position="200"/>
        <end position="220"/>
    </location>
</feature>
<feature type="transmembrane region" description="Helical" evidence="1">
    <location>
        <begin position="226"/>
        <end position="246"/>
    </location>
</feature>
<feature type="transmembrane region" description="Helical" evidence="1">
    <location>
        <begin position="254"/>
        <end position="274"/>
    </location>
</feature>
<feature type="transmembrane region" description="Helical" evidence="1">
    <location>
        <begin position="316"/>
        <end position="336"/>
    </location>
</feature>
<organism>
    <name type="scientific">Streptococcus pyogenes serotype M18 (strain MGAS8232)</name>
    <dbReference type="NCBI Taxonomy" id="186103"/>
    <lineage>
        <taxon>Bacteria</taxon>
        <taxon>Bacillati</taxon>
        <taxon>Bacillota</taxon>
        <taxon>Bacilli</taxon>
        <taxon>Lactobacillales</taxon>
        <taxon>Streptococcaceae</taxon>
        <taxon>Streptococcus</taxon>
    </lineage>
</organism>
<gene>
    <name evidence="1" type="primary">mraY</name>
    <name type="ordered locus">spyM18_1673</name>
</gene>